<comment type="subunit">
    <text evidence="1">Part of the 50S ribosomal subunit.</text>
</comment>
<comment type="similarity">
    <text evidence="1">Belongs to the universal ribosomal protein uL30 family.</text>
</comment>
<protein>
    <recommendedName>
        <fullName evidence="1">Large ribosomal subunit protein uL30</fullName>
    </recommendedName>
    <alternativeName>
        <fullName evidence="2">50S ribosomal protein L30</fullName>
    </alternativeName>
</protein>
<evidence type="ECO:0000255" key="1">
    <source>
        <dbReference type="HAMAP-Rule" id="MF_01371"/>
    </source>
</evidence>
<evidence type="ECO:0000305" key="2"/>
<keyword id="KW-0687">Ribonucleoprotein</keyword>
<keyword id="KW-0689">Ribosomal protein</keyword>
<name>RL30_BACP2</name>
<dbReference type="EMBL" id="CP000813">
    <property type="protein sequence ID" value="ABV60820.1"/>
    <property type="molecule type" value="Genomic_DNA"/>
</dbReference>
<dbReference type="RefSeq" id="WP_003217067.1">
    <property type="nucleotide sequence ID" value="NZ_VEIS01000020.1"/>
</dbReference>
<dbReference type="SMR" id="A8F9A3"/>
<dbReference type="STRING" id="315750.BPUM_0120"/>
<dbReference type="GeneID" id="66361751"/>
<dbReference type="KEGG" id="bpu:BPUM_0120"/>
<dbReference type="eggNOG" id="COG1841">
    <property type="taxonomic scope" value="Bacteria"/>
</dbReference>
<dbReference type="HOGENOM" id="CLU_131047_2_1_9"/>
<dbReference type="OrthoDB" id="9812790at2"/>
<dbReference type="Proteomes" id="UP000001355">
    <property type="component" value="Chromosome"/>
</dbReference>
<dbReference type="GO" id="GO:0022625">
    <property type="term" value="C:cytosolic large ribosomal subunit"/>
    <property type="evidence" value="ECO:0007669"/>
    <property type="project" value="TreeGrafter"/>
</dbReference>
<dbReference type="GO" id="GO:0003735">
    <property type="term" value="F:structural constituent of ribosome"/>
    <property type="evidence" value="ECO:0007669"/>
    <property type="project" value="InterPro"/>
</dbReference>
<dbReference type="GO" id="GO:0006412">
    <property type="term" value="P:translation"/>
    <property type="evidence" value="ECO:0007669"/>
    <property type="project" value="UniProtKB-UniRule"/>
</dbReference>
<dbReference type="CDD" id="cd01658">
    <property type="entry name" value="Ribosomal_L30"/>
    <property type="match status" value="1"/>
</dbReference>
<dbReference type="FunFam" id="3.30.1390.20:FF:000001">
    <property type="entry name" value="50S ribosomal protein L30"/>
    <property type="match status" value="1"/>
</dbReference>
<dbReference type="Gene3D" id="3.30.1390.20">
    <property type="entry name" value="Ribosomal protein L30, ferredoxin-like fold domain"/>
    <property type="match status" value="1"/>
</dbReference>
<dbReference type="HAMAP" id="MF_01371_B">
    <property type="entry name" value="Ribosomal_uL30_B"/>
    <property type="match status" value="1"/>
</dbReference>
<dbReference type="InterPro" id="IPR036919">
    <property type="entry name" value="Ribo_uL30_ferredoxin-like_sf"/>
</dbReference>
<dbReference type="InterPro" id="IPR005996">
    <property type="entry name" value="Ribosomal_uL30_bac-type"/>
</dbReference>
<dbReference type="InterPro" id="IPR018038">
    <property type="entry name" value="Ribosomal_uL30_CS"/>
</dbReference>
<dbReference type="InterPro" id="IPR016082">
    <property type="entry name" value="Ribosomal_uL30_ferredoxin-like"/>
</dbReference>
<dbReference type="NCBIfam" id="TIGR01308">
    <property type="entry name" value="rpmD_bact"/>
    <property type="match status" value="1"/>
</dbReference>
<dbReference type="PANTHER" id="PTHR15892:SF2">
    <property type="entry name" value="LARGE RIBOSOMAL SUBUNIT PROTEIN UL30M"/>
    <property type="match status" value="1"/>
</dbReference>
<dbReference type="PANTHER" id="PTHR15892">
    <property type="entry name" value="MITOCHONDRIAL RIBOSOMAL PROTEIN L30"/>
    <property type="match status" value="1"/>
</dbReference>
<dbReference type="Pfam" id="PF00327">
    <property type="entry name" value="Ribosomal_L30"/>
    <property type="match status" value="1"/>
</dbReference>
<dbReference type="PIRSF" id="PIRSF002211">
    <property type="entry name" value="Ribosomal_L30_bac-type"/>
    <property type="match status" value="1"/>
</dbReference>
<dbReference type="SUPFAM" id="SSF55129">
    <property type="entry name" value="Ribosomal protein L30p/L7e"/>
    <property type="match status" value="1"/>
</dbReference>
<dbReference type="PROSITE" id="PS00634">
    <property type="entry name" value="RIBOSOMAL_L30"/>
    <property type="match status" value="1"/>
</dbReference>
<accession>A8F9A3</accession>
<feature type="chain" id="PRO_1000068193" description="Large ribosomal subunit protein uL30">
    <location>
        <begin position="1"/>
        <end position="60"/>
    </location>
</feature>
<gene>
    <name evidence="1" type="primary">rpmD</name>
    <name type="ordered locus">BPUM_0120</name>
</gene>
<reference key="1">
    <citation type="journal article" date="2007" name="PLoS ONE">
        <title>Paradoxical DNA repair and peroxide resistance gene conservation in Bacillus pumilus SAFR-032.</title>
        <authorList>
            <person name="Gioia J."/>
            <person name="Yerrapragada S."/>
            <person name="Qin X."/>
            <person name="Jiang H."/>
            <person name="Igboeli O.C."/>
            <person name="Muzny D."/>
            <person name="Dugan-Rocha S."/>
            <person name="Ding Y."/>
            <person name="Hawes A."/>
            <person name="Liu W."/>
            <person name="Perez L."/>
            <person name="Kovar C."/>
            <person name="Dinh H."/>
            <person name="Lee S."/>
            <person name="Nazareth L."/>
            <person name="Blyth P."/>
            <person name="Holder M."/>
            <person name="Buhay C."/>
            <person name="Tirumalai M.R."/>
            <person name="Liu Y."/>
            <person name="Dasgupta I."/>
            <person name="Bokhetache L."/>
            <person name="Fujita M."/>
            <person name="Karouia F."/>
            <person name="Eswara Moorthy P."/>
            <person name="Siefert J."/>
            <person name="Uzman A."/>
            <person name="Buzumbo P."/>
            <person name="Verma A."/>
            <person name="Zwiya H."/>
            <person name="McWilliams B.D."/>
            <person name="Olowu A."/>
            <person name="Clinkenbeard K.D."/>
            <person name="Newcombe D."/>
            <person name="Golebiewski L."/>
            <person name="Petrosino J.F."/>
            <person name="Nicholson W.L."/>
            <person name="Fox G.E."/>
            <person name="Venkateswaran K."/>
            <person name="Highlander S.K."/>
            <person name="Weinstock G.M."/>
        </authorList>
    </citation>
    <scope>NUCLEOTIDE SEQUENCE [LARGE SCALE GENOMIC DNA]</scope>
    <source>
        <strain>SAFR-032</strain>
    </source>
</reference>
<sequence length="60" mass="6752">MANKLEITLKRSVIGRPEDQRVTVRTLGLKKTNQTVVHEDNAAIRGMINKVSHLVSVKEQ</sequence>
<proteinExistence type="inferred from homology"/>
<organism>
    <name type="scientific">Bacillus pumilus (strain SAFR-032)</name>
    <dbReference type="NCBI Taxonomy" id="315750"/>
    <lineage>
        <taxon>Bacteria</taxon>
        <taxon>Bacillati</taxon>
        <taxon>Bacillota</taxon>
        <taxon>Bacilli</taxon>
        <taxon>Bacillales</taxon>
        <taxon>Bacillaceae</taxon>
        <taxon>Bacillus</taxon>
    </lineage>
</organism>